<comment type="subcellular location">
    <subcellularLocation>
        <location evidence="1">Cell inner membrane</location>
        <topology evidence="1">Multi-pass membrane protein</topology>
    </subcellularLocation>
</comment>
<comment type="similarity">
    <text evidence="1">Belongs to the UPF0299 family.</text>
</comment>
<evidence type="ECO:0000255" key="1">
    <source>
        <dbReference type="HAMAP-Rule" id="MF_01144"/>
    </source>
</evidence>
<feature type="chain" id="PRO_1000065452" description="UPF0299 membrane protein CKO_00648">
    <location>
        <begin position="1"/>
        <end position="132"/>
    </location>
</feature>
<feature type="transmembrane region" description="Helical" evidence="1">
    <location>
        <begin position="7"/>
        <end position="27"/>
    </location>
</feature>
<feature type="transmembrane region" description="Helical" evidence="1">
    <location>
        <begin position="31"/>
        <end position="51"/>
    </location>
</feature>
<feature type="transmembrane region" description="Helical" evidence="1">
    <location>
        <begin position="63"/>
        <end position="83"/>
    </location>
</feature>
<feature type="transmembrane region" description="Helical" evidence="1">
    <location>
        <begin position="93"/>
        <end position="113"/>
    </location>
</feature>
<gene>
    <name type="ordered locus">CKO_00648</name>
</gene>
<protein>
    <recommendedName>
        <fullName evidence="1">UPF0299 membrane protein CKO_00648</fullName>
    </recommendedName>
</protein>
<proteinExistence type="inferred from homology"/>
<dbReference type="EMBL" id="CP000822">
    <property type="protein sequence ID" value="ABV11802.1"/>
    <property type="molecule type" value="Genomic_DNA"/>
</dbReference>
<dbReference type="RefSeq" id="WP_012131626.1">
    <property type="nucleotide sequence ID" value="NC_009792.1"/>
</dbReference>
<dbReference type="SMR" id="A8AE89"/>
<dbReference type="STRING" id="290338.CKO_00648"/>
<dbReference type="GeneID" id="45134868"/>
<dbReference type="KEGG" id="cko:CKO_00648"/>
<dbReference type="HOGENOM" id="CLU_113736_1_1_6"/>
<dbReference type="OrthoDB" id="385012at2"/>
<dbReference type="Proteomes" id="UP000008148">
    <property type="component" value="Chromosome"/>
</dbReference>
<dbReference type="GO" id="GO:0005886">
    <property type="term" value="C:plasma membrane"/>
    <property type="evidence" value="ECO:0007669"/>
    <property type="project" value="UniProtKB-SubCell"/>
</dbReference>
<dbReference type="HAMAP" id="MF_01144">
    <property type="entry name" value="UPF0299"/>
    <property type="match status" value="1"/>
</dbReference>
<dbReference type="InterPro" id="IPR005538">
    <property type="entry name" value="LrgA/CidA"/>
</dbReference>
<dbReference type="InterPro" id="IPR022957">
    <property type="entry name" value="Uncharacterised_UPF0299"/>
</dbReference>
<dbReference type="NCBIfam" id="NF002494">
    <property type="entry name" value="PRK01821.1"/>
    <property type="match status" value="1"/>
</dbReference>
<dbReference type="PANTHER" id="PTHR33931">
    <property type="entry name" value="HOLIN-LIKE PROTEIN CIDA-RELATED"/>
    <property type="match status" value="1"/>
</dbReference>
<dbReference type="PANTHER" id="PTHR33931:SF5">
    <property type="entry name" value="UPF0299 MEMBRANE PROTEIN YOHJ"/>
    <property type="match status" value="1"/>
</dbReference>
<dbReference type="Pfam" id="PF03788">
    <property type="entry name" value="LrgA"/>
    <property type="match status" value="1"/>
</dbReference>
<accession>A8AE89</accession>
<name>Y648_CITK8</name>
<sequence length="132" mass="14614">MSKSLNIIWQYLRAFVLIYACLYAGIFIASLLPITIPGSIIGMLILFVLLALQILPAKWVNPGCYVLIRYMALLFVPIGVGVMQYFDLLRAQFGPVVVSCAISTLVVFLVVSWSSHIVHGERKVLGQKGSKK</sequence>
<keyword id="KW-0997">Cell inner membrane</keyword>
<keyword id="KW-1003">Cell membrane</keyword>
<keyword id="KW-0472">Membrane</keyword>
<keyword id="KW-1185">Reference proteome</keyword>
<keyword id="KW-0812">Transmembrane</keyword>
<keyword id="KW-1133">Transmembrane helix</keyword>
<organism>
    <name type="scientific">Citrobacter koseri (strain ATCC BAA-895 / CDC 4225-83 / SGSC4696)</name>
    <dbReference type="NCBI Taxonomy" id="290338"/>
    <lineage>
        <taxon>Bacteria</taxon>
        <taxon>Pseudomonadati</taxon>
        <taxon>Pseudomonadota</taxon>
        <taxon>Gammaproteobacteria</taxon>
        <taxon>Enterobacterales</taxon>
        <taxon>Enterobacteriaceae</taxon>
        <taxon>Citrobacter</taxon>
    </lineage>
</organism>
<reference key="1">
    <citation type="submission" date="2007-08" db="EMBL/GenBank/DDBJ databases">
        <authorList>
            <consortium name="The Citrobacter koseri Genome Sequencing Project"/>
            <person name="McClelland M."/>
            <person name="Sanderson E.K."/>
            <person name="Porwollik S."/>
            <person name="Spieth J."/>
            <person name="Clifton W.S."/>
            <person name="Latreille P."/>
            <person name="Courtney L."/>
            <person name="Wang C."/>
            <person name="Pepin K."/>
            <person name="Bhonagiri V."/>
            <person name="Nash W."/>
            <person name="Johnson M."/>
            <person name="Thiruvilangam P."/>
            <person name="Wilson R."/>
        </authorList>
    </citation>
    <scope>NUCLEOTIDE SEQUENCE [LARGE SCALE GENOMIC DNA]</scope>
    <source>
        <strain>ATCC BAA-895 / CDC 4225-83 / SGSC4696</strain>
    </source>
</reference>